<keyword id="KW-0067">ATP-binding</keyword>
<keyword id="KW-0963">Cytoplasm</keyword>
<keyword id="KW-0238">DNA-binding</keyword>
<keyword id="KW-0413">Isomerase</keyword>
<keyword id="KW-0460">Magnesium</keyword>
<keyword id="KW-0479">Metal-binding</keyword>
<keyword id="KW-0547">Nucleotide-binding</keyword>
<keyword id="KW-1185">Reference proteome</keyword>
<keyword id="KW-0799">Topoisomerase</keyword>
<keyword id="KW-0862">Zinc</keyword>
<keyword id="KW-0863">Zinc-finger</keyword>
<name>RGYR2_AQUAE</name>
<protein>
    <recommendedName>
        <fullName evidence="1">Reverse gyrase 2</fullName>
        <ecNumber evidence="1">5.6.2.-</ecNumber>
    </recommendedName>
</protein>
<comment type="function">
    <text evidence="1">Modifies the topological state of DNA by introducing positive supercoils in an ATP-dependent process, increasing the linking number in steps of +1. Binds to single-stranded DNA, transiently cleaves and then rejoins the ends, introducing a positive supercoil in the process. The scissile phosphodiester is attacked by the catalytic tyrosine of the enzyme, resulting in the formation of a DNA-(5'-phosphotyrosyl)-enzyme intermediate. Probably involved in rewinding DNA strands in regions of the chromosome that have opened up to allow replication, transcription, DNA repair and/or for DNA protection.</text>
</comment>
<comment type="catalytic activity">
    <reaction evidence="1">
        <text>ATP + H2O = ADP + phosphate + H(+)</text>
        <dbReference type="Rhea" id="RHEA:13065"/>
        <dbReference type="ChEBI" id="CHEBI:15377"/>
        <dbReference type="ChEBI" id="CHEBI:15378"/>
        <dbReference type="ChEBI" id="CHEBI:30616"/>
        <dbReference type="ChEBI" id="CHEBI:43474"/>
        <dbReference type="ChEBI" id="CHEBI:456216"/>
    </reaction>
</comment>
<comment type="cofactor">
    <cofactor evidence="1">
        <name>Zn(2+)</name>
        <dbReference type="ChEBI" id="CHEBI:29105"/>
    </cofactor>
    <text evidence="1">Binds 1 zinc ion per subunit.</text>
</comment>
<comment type="cofactor">
    <cofactor evidence="1">
        <name>Mg(2+)</name>
        <dbReference type="ChEBI" id="CHEBI:18420"/>
    </cofactor>
</comment>
<comment type="subunit">
    <text evidence="1">Monomer.</text>
</comment>
<comment type="subcellular location">
    <subcellularLocation>
        <location evidence="1">Cytoplasm</location>
    </subcellularLocation>
</comment>
<comment type="domain">
    <text evidence="1">Introduction of positive supercoils requires the cooperation of both domains. The helicase-like domain probably does not directly unwind DNA, but more likely acts by driving ATP-dependent conformational changes within the whole enzyme. A beta hairpin in the 'latch' region of the N-terminal domain plays a regulatory role in the enzyme, repressing topoisomerase activity in the absence of ATP and preventing the enzyme from acting as an ATP-independent relaxing enzyme; it also helps to coordinate nucleotide hydrolysis by the ATPase domain with the supercoiling activity of the topoisomerase domain.</text>
</comment>
<comment type="miscellaneous">
    <text evidence="1">This enzyme is the only unique feature of hyperthermophilic bacteria/archaea known and seems to be essential for adaptation to life at high temperatures. It may play a role in stabilization of DNA at high temperatures.</text>
</comment>
<comment type="similarity">
    <text evidence="1">In the N-terminal section; belongs to the DEAD box helicase family. DDVD subfamily.</text>
</comment>
<comment type="similarity">
    <text evidence="1">In the C-terminal section; belongs to the type IA topoisomerase family.</text>
</comment>
<comment type="caution">
    <text evidence="5">Ile-198 is present instead of the conserved Val which is part of the DDVD box.</text>
</comment>
<comment type="sequence caution" evidence="5">
    <conflict type="erroneous initiation">
        <sequence resource="EMBL-CDS" id="AAC07187"/>
    </conflict>
    <text>Extended N-terminus.</text>
</comment>
<organism>
    <name type="scientific">Aquifex aeolicus (strain VF5)</name>
    <dbReference type="NCBI Taxonomy" id="224324"/>
    <lineage>
        <taxon>Bacteria</taxon>
        <taxon>Pseudomonadati</taxon>
        <taxon>Aquificota</taxon>
        <taxon>Aquificia</taxon>
        <taxon>Aquificales</taxon>
        <taxon>Aquificaceae</taxon>
        <taxon>Aquifex</taxon>
    </lineage>
</organism>
<feature type="chain" id="PRO_0000158081" description="Reverse gyrase 2">
    <location>
        <begin position="1"/>
        <end position="1159"/>
    </location>
</feature>
<feature type="domain" description="Helicase ATP-binding" evidence="1">
    <location>
        <begin position="86"/>
        <end position="275"/>
    </location>
</feature>
<feature type="domain" description="Toprim" evidence="1">
    <location>
        <begin position="587"/>
        <end position="743"/>
    </location>
</feature>
<feature type="domain" description="Topo IA-type catalytic" evidence="3">
    <location>
        <begin position="759"/>
        <end position="1152"/>
    </location>
</feature>
<feature type="zinc finger region" description="RG N-terminal-type" evidence="2">
    <location>
        <begin position="1"/>
        <end position="40"/>
    </location>
</feature>
<feature type="region of interest" description="Topoisomerase I" evidence="1">
    <location>
        <begin position="583"/>
        <end position="1159"/>
    </location>
</feature>
<feature type="short sequence motif" description="DEAD box" evidence="1">
    <location>
        <begin position="196"/>
        <end position="199"/>
    </location>
</feature>
<feature type="active site" description="O-(5'-phospho-DNA)-tyrosine intermediate" evidence="3">
    <location>
        <position position="902"/>
    </location>
</feature>
<feature type="binding site" evidence="1">
    <location>
        <position position="10"/>
    </location>
    <ligand>
        <name>Zn(2+)</name>
        <dbReference type="ChEBI" id="CHEBI:29105"/>
    </ligand>
</feature>
<feature type="binding site" evidence="1">
    <location>
        <position position="13"/>
    </location>
    <ligand>
        <name>Zn(2+)</name>
        <dbReference type="ChEBI" id="CHEBI:29105"/>
    </ligand>
</feature>
<feature type="binding site" evidence="1">
    <location>
        <position position="28"/>
    </location>
    <ligand>
        <name>Zn(2+)</name>
        <dbReference type="ChEBI" id="CHEBI:29105"/>
    </ligand>
</feature>
<feature type="binding site" evidence="1">
    <location>
        <position position="31"/>
    </location>
    <ligand>
        <name>Zn(2+)</name>
        <dbReference type="ChEBI" id="CHEBI:29105"/>
    </ligand>
</feature>
<feature type="binding site" evidence="1">
    <location>
        <position position="82"/>
    </location>
    <ligand>
        <name>ATP</name>
        <dbReference type="ChEBI" id="CHEBI:30616"/>
    </ligand>
</feature>
<feature type="binding site" evidence="1">
    <location>
        <begin position="99"/>
        <end position="106"/>
    </location>
    <ligand>
        <name>ATP</name>
        <dbReference type="ChEBI" id="CHEBI:30616"/>
    </ligand>
</feature>
<feature type="binding site" evidence="1">
    <location>
        <position position="593"/>
    </location>
    <ligand>
        <name>Mg(2+)</name>
        <dbReference type="ChEBI" id="CHEBI:18420"/>
        <note>catalytic</note>
    </ligand>
</feature>
<feature type="binding site" evidence="1">
    <location>
        <position position="712"/>
    </location>
    <ligand>
        <name>Mg(2+)</name>
        <dbReference type="ChEBI" id="CHEBI:18420"/>
        <note>catalytic</note>
    </ligand>
</feature>
<proteinExistence type="inferred from homology"/>
<dbReference type="EC" id="5.6.2.-" evidence="1"/>
<dbReference type="EMBL" id="AE000657">
    <property type="protein sequence ID" value="AAC07187.1"/>
    <property type="status" value="ALT_INIT"/>
    <property type="molecule type" value="Genomic_DNA"/>
</dbReference>
<dbReference type="PIR" id="G70399">
    <property type="entry name" value="G70399"/>
</dbReference>
<dbReference type="RefSeq" id="NP_213790.1">
    <property type="nucleotide sequence ID" value="NC_000918.1"/>
</dbReference>
<dbReference type="RefSeq" id="WP_164930680.1">
    <property type="nucleotide sequence ID" value="NC_000918.1"/>
</dbReference>
<dbReference type="SMR" id="O67226"/>
<dbReference type="STRING" id="224324.aq_1159"/>
<dbReference type="EnsemblBacteria" id="AAC07187">
    <property type="protein sequence ID" value="AAC07187"/>
    <property type="gene ID" value="aq_1159"/>
</dbReference>
<dbReference type="KEGG" id="aae:aq_1159"/>
<dbReference type="PATRIC" id="fig|224324.8.peg.903"/>
<dbReference type="eggNOG" id="COG1110">
    <property type="taxonomic scope" value="Bacteria"/>
</dbReference>
<dbReference type="HOGENOM" id="CLU_002886_0_0_0"/>
<dbReference type="InParanoid" id="O67226"/>
<dbReference type="OrthoDB" id="9804262at2"/>
<dbReference type="Proteomes" id="UP000000798">
    <property type="component" value="Chromosome"/>
</dbReference>
<dbReference type="GO" id="GO:0005737">
    <property type="term" value="C:cytoplasm"/>
    <property type="evidence" value="ECO:0007669"/>
    <property type="project" value="UniProtKB-SubCell"/>
</dbReference>
<dbReference type="GO" id="GO:0005524">
    <property type="term" value="F:ATP binding"/>
    <property type="evidence" value="ECO:0007669"/>
    <property type="project" value="UniProtKB-UniRule"/>
</dbReference>
<dbReference type="GO" id="GO:0016887">
    <property type="term" value="F:ATP hydrolysis activity"/>
    <property type="evidence" value="ECO:0007669"/>
    <property type="project" value="RHEA"/>
</dbReference>
<dbReference type="GO" id="GO:0003677">
    <property type="term" value="F:DNA binding"/>
    <property type="evidence" value="ECO:0007669"/>
    <property type="project" value="UniProtKB-UniRule"/>
</dbReference>
<dbReference type="GO" id="GO:0003918">
    <property type="term" value="F:DNA topoisomerase type II (double strand cut, ATP-hydrolyzing) activity"/>
    <property type="evidence" value="ECO:0007669"/>
    <property type="project" value="UniProtKB-EC"/>
</dbReference>
<dbReference type="GO" id="GO:0160097">
    <property type="term" value="F:reverse gyrase activity"/>
    <property type="evidence" value="ECO:0007669"/>
    <property type="project" value="UniProtKB-UniRule"/>
</dbReference>
<dbReference type="GO" id="GO:0008270">
    <property type="term" value="F:zinc ion binding"/>
    <property type="evidence" value="ECO:0007669"/>
    <property type="project" value="UniProtKB-UniRule"/>
</dbReference>
<dbReference type="GO" id="GO:0006265">
    <property type="term" value="P:DNA topological change"/>
    <property type="evidence" value="ECO:0007669"/>
    <property type="project" value="UniProtKB-UniRule"/>
</dbReference>
<dbReference type="CDD" id="cd17924">
    <property type="entry name" value="DDXDc_reverse_gyrase"/>
    <property type="match status" value="1"/>
</dbReference>
<dbReference type="CDD" id="cd18798">
    <property type="entry name" value="SF2_C_reverse_gyrase"/>
    <property type="match status" value="1"/>
</dbReference>
<dbReference type="CDD" id="cd00186">
    <property type="entry name" value="TOP1Ac"/>
    <property type="match status" value="1"/>
</dbReference>
<dbReference type="CDD" id="cd03361">
    <property type="entry name" value="TOPRIM_TopoIA_RevGyr"/>
    <property type="match status" value="1"/>
</dbReference>
<dbReference type="Gene3D" id="2.60.510.20">
    <property type="match status" value="1"/>
</dbReference>
<dbReference type="Gene3D" id="3.40.50.140">
    <property type="match status" value="1"/>
</dbReference>
<dbReference type="Gene3D" id="3.40.50.300">
    <property type="entry name" value="P-loop containing nucleotide triphosphate hydrolases"/>
    <property type="match status" value="3"/>
</dbReference>
<dbReference type="Gene3D" id="1.10.460.10">
    <property type="entry name" value="Topoisomerase I, domain 2"/>
    <property type="match status" value="1"/>
</dbReference>
<dbReference type="Gene3D" id="1.10.290.10">
    <property type="entry name" value="Topoisomerase I, domain 4"/>
    <property type="match status" value="1"/>
</dbReference>
<dbReference type="HAMAP" id="MF_01125">
    <property type="entry name" value="Reverse_gyrase"/>
    <property type="match status" value="1"/>
</dbReference>
<dbReference type="InterPro" id="IPR011545">
    <property type="entry name" value="DEAD/DEAH_box_helicase_dom"/>
</dbReference>
<dbReference type="InterPro" id="IPR014001">
    <property type="entry name" value="Helicase_ATP-bd"/>
</dbReference>
<dbReference type="InterPro" id="IPR027417">
    <property type="entry name" value="P-loop_NTPase"/>
</dbReference>
<dbReference type="InterPro" id="IPR005736">
    <property type="entry name" value="Reverse_gyrase"/>
</dbReference>
<dbReference type="InterPro" id="IPR003601">
    <property type="entry name" value="Topo_IA_2"/>
</dbReference>
<dbReference type="InterPro" id="IPR013497">
    <property type="entry name" value="Topo_IA_cen"/>
</dbReference>
<dbReference type="InterPro" id="IPR013824">
    <property type="entry name" value="Topo_IA_cen_sub1"/>
</dbReference>
<dbReference type="InterPro" id="IPR013826">
    <property type="entry name" value="Topo_IA_cen_sub3"/>
</dbReference>
<dbReference type="InterPro" id="IPR023405">
    <property type="entry name" value="Topo_IA_core_domain"/>
</dbReference>
<dbReference type="InterPro" id="IPR003602">
    <property type="entry name" value="Topo_IA_DNA-bd_dom"/>
</dbReference>
<dbReference type="InterPro" id="IPR006171">
    <property type="entry name" value="TOPRIM_dom"/>
</dbReference>
<dbReference type="InterPro" id="IPR034142">
    <property type="entry name" value="TOPRIM_RevGyr"/>
</dbReference>
<dbReference type="InterPro" id="IPR040569">
    <property type="entry name" value="Znf_Rg"/>
</dbReference>
<dbReference type="NCBIfam" id="TIGR01054">
    <property type="entry name" value="rgy"/>
    <property type="match status" value="1"/>
</dbReference>
<dbReference type="PANTHER" id="PTHR43505">
    <property type="entry name" value="REVERSE GYRASE"/>
    <property type="match status" value="1"/>
</dbReference>
<dbReference type="PANTHER" id="PTHR43505:SF1">
    <property type="entry name" value="REVERSE GYRASE"/>
    <property type="match status" value="1"/>
</dbReference>
<dbReference type="Pfam" id="PF00270">
    <property type="entry name" value="DEAD"/>
    <property type="match status" value="1"/>
</dbReference>
<dbReference type="Pfam" id="PF01131">
    <property type="entry name" value="Topoisom_bac"/>
    <property type="match status" value="1"/>
</dbReference>
<dbReference type="Pfam" id="PF01751">
    <property type="entry name" value="Toprim"/>
    <property type="match status" value="1"/>
</dbReference>
<dbReference type="Pfam" id="PF17915">
    <property type="entry name" value="zf_Rg"/>
    <property type="match status" value="1"/>
</dbReference>
<dbReference type="PRINTS" id="PR00417">
    <property type="entry name" value="PRTPISMRASEI"/>
</dbReference>
<dbReference type="SMART" id="SM00487">
    <property type="entry name" value="DEXDc"/>
    <property type="match status" value="1"/>
</dbReference>
<dbReference type="SMART" id="SM00437">
    <property type="entry name" value="TOP1Ac"/>
    <property type="match status" value="1"/>
</dbReference>
<dbReference type="SMART" id="SM00436">
    <property type="entry name" value="TOP1Bc"/>
    <property type="match status" value="1"/>
</dbReference>
<dbReference type="SMART" id="SM00493">
    <property type="entry name" value="TOPRIM"/>
    <property type="match status" value="1"/>
</dbReference>
<dbReference type="SUPFAM" id="SSF52540">
    <property type="entry name" value="P-loop containing nucleoside triphosphate hydrolases"/>
    <property type="match status" value="2"/>
</dbReference>
<dbReference type="SUPFAM" id="SSF56712">
    <property type="entry name" value="Prokaryotic type I DNA topoisomerase"/>
    <property type="match status" value="1"/>
</dbReference>
<dbReference type="PROSITE" id="PS51192">
    <property type="entry name" value="HELICASE_ATP_BIND_1"/>
    <property type="match status" value="1"/>
</dbReference>
<dbReference type="PROSITE" id="PS52039">
    <property type="entry name" value="TOPO_IA_2"/>
    <property type="match status" value="1"/>
</dbReference>
<dbReference type="PROSITE" id="PS50880">
    <property type="entry name" value="TOPRIM"/>
    <property type="match status" value="1"/>
</dbReference>
<dbReference type="PROSITE" id="PS52036">
    <property type="entry name" value="ZF_RG_N"/>
    <property type="match status" value="1"/>
</dbReference>
<evidence type="ECO:0000255" key="1">
    <source>
        <dbReference type="HAMAP-Rule" id="MF_01125"/>
    </source>
</evidence>
<evidence type="ECO:0000255" key="2">
    <source>
        <dbReference type="PROSITE-ProRule" id="PRU01380"/>
    </source>
</evidence>
<evidence type="ECO:0000255" key="3">
    <source>
        <dbReference type="PROSITE-ProRule" id="PRU01383"/>
    </source>
</evidence>
<evidence type="ECO:0000303" key="4">
    <source>
    </source>
</evidence>
<evidence type="ECO:0000305" key="5"/>
<gene>
    <name evidence="1" type="primary">rgy2</name>
    <name evidence="4" type="synonym">topG1</name>
    <name type="ordered locus">aq_1159</name>
</gene>
<accession>O67226</accession>
<reference key="1">
    <citation type="journal article" date="1998" name="Nature">
        <title>The complete genome of the hyperthermophilic bacterium Aquifex aeolicus.</title>
        <authorList>
            <person name="Deckert G."/>
            <person name="Warren P.V."/>
            <person name="Gaasterland T."/>
            <person name="Young W.G."/>
            <person name="Lenox A.L."/>
            <person name="Graham D.E."/>
            <person name="Overbeek R."/>
            <person name="Snead M.A."/>
            <person name="Keller M."/>
            <person name="Aujay M."/>
            <person name="Huber R."/>
            <person name="Feldman R.A."/>
            <person name="Short J.M."/>
            <person name="Olsen G.J."/>
            <person name="Swanson R.V."/>
        </authorList>
    </citation>
    <scope>NUCLEOTIDE SEQUENCE [LARGE SCALE GENOMIC DNA]</scope>
    <source>
        <strain>VF5</strain>
    </source>
</reference>
<sequence>MALELIERGCPNCGGVISSDRLEKGLPCSKCLPKPTEEKVCDALEELKTLKYLKPFCDTDKSLERFINFFEKAVGAKPWSLQRVWAKRVFMNQSFAIVAPTGVGKTTFGLVMSLFLKGRVLAIFPTRLLAQQAGDRLSELAQKVGVNKKILIYQSKKNIREQFLNGDWDILLGTNMFLHKNFENLINFKFKLIFIDDIDSFLKRGKNVDYLFKLLGFSGEEIKLALKENKTQRDYDRLARIRKRKRDTVLIVSSATLKPRGKRAYLFRNLLGFDVQKAITTLRNIVDVAEPVKDLEEALEKSVELIKKLGKGGLVYLSVFYGKDKVQEVKEFYRKHGINAVSYLDYKPEELYQILEKGEFDVAVGISHITNPLVRGIDLPHIIRYAVFLDPPKHVFPTELTLSPPLLHGLLLTLLNLFEGDDRLKAIQYVMYLKRYLTLREEQLDNYPRIKERVEEIKNFLENYLKDENFLKKIKESEDISLVPKEGKLYIVVGDANSYIQASGRTSRFIAGGMTKGLSVVYYSDPKAFYSLKKRLALYYMTQEIEFKRLSEVDLNKLIKEIDEDRKRAREILQGKGVAQIKDLFKTTLVIVESPNKARTIAGFFGKPQMRLVEDSVAYEVPLGDRLLVITASLGHVLDLVTDKGFFGVLDDTYPYLPVYDTIKICRETHEQHTEYEYLKKRCKGKIEDKLEIIKGVREVSYEVDEVFIATDPDAEGEKIGYDLYLLSKPFNFNIKRAEFHEVTPKAFREAIQNPREVDLNLVKAQLVRRILDRWVGFTLSHILWDAFGKKWLSAGRVQTPVLGWVIKRYEESKEKKGEILLHVNDFPLKIEIEDLMFAKEIFKDLELADISLSNPQEEEKRPLPPYTTDTVLEDANEKLHLSAHKTMKILQELFEAGYITYHRTDSTRVSDAGKYLVAKPYITKMFGEEYFYPRSWGEGGAHECIRPTRPLEPKDLEFMITAGIAEFEDPENALKVYELIFKRFMASQMRPAKVITEEIILKLPYFEWKERVVTEVKEHGFDLMYPTFKVFPKKEKLEITHKEFREVPKVYPYTQGTLIQEMKRRGLGRPSTYAQIVQTLLERHYVVEEKGFLIPTDLGREVYEYLTKHFPEWTSEELTRKLEEAMDKIERGELDYMEVLKEVHRIKVLLKEEKAFKK</sequence>